<name>RRP42_PYRHO</name>
<proteinExistence type="inferred from homology"/>
<keyword id="KW-0963">Cytoplasm</keyword>
<keyword id="KW-0271">Exosome</keyword>
<sequence>MSDNEIVAGIMRDHIINLLKEGKRIDDRGFEDYRPIEIEVGIIEKAEGSALVKLGSTQVLVGIKTTLGEPFPDTPNMGVMTTNVELVPLASPTFEPGPPDERAIELARVTDRGIRESRALNLEKMVIVPGKIVRVVFIDVHVLDHDGNLMDAIGIASIAALLNAKVPKVEYNEETGEVEILEEKEPLPVERIPIPVTFAKIGNILVVDPSLEEELVMDGRLTVTTDETGHISAVQKGEGGAFKLEEVMYAVETAFKKAEEIRKIVLEAIKKSGE</sequence>
<accession>O59224</accession>
<gene>
    <name evidence="1" type="primary">rrp42</name>
    <name type="ordered locus">PH1548</name>
</gene>
<organism>
    <name type="scientific">Pyrococcus horikoshii (strain ATCC 700860 / DSM 12428 / JCM 9974 / NBRC 100139 / OT-3)</name>
    <dbReference type="NCBI Taxonomy" id="70601"/>
    <lineage>
        <taxon>Archaea</taxon>
        <taxon>Methanobacteriati</taxon>
        <taxon>Methanobacteriota</taxon>
        <taxon>Thermococci</taxon>
        <taxon>Thermococcales</taxon>
        <taxon>Thermococcaceae</taxon>
        <taxon>Pyrococcus</taxon>
    </lineage>
</organism>
<protein>
    <recommendedName>
        <fullName evidence="1">Exosome complex component Rrp42</fullName>
    </recommendedName>
</protein>
<dbReference type="EMBL" id="BA000001">
    <property type="protein sequence ID" value="BAA30660.1"/>
    <property type="molecule type" value="Genomic_DNA"/>
</dbReference>
<dbReference type="PIR" id="D71032">
    <property type="entry name" value="D71032"/>
</dbReference>
<dbReference type="RefSeq" id="WP_010885628.1">
    <property type="nucleotide sequence ID" value="NC_000961.1"/>
</dbReference>
<dbReference type="SMR" id="O59224"/>
<dbReference type="STRING" id="70601.gene:9378538"/>
<dbReference type="EnsemblBacteria" id="BAA30660">
    <property type="protein sequence ID" value="BAA30660"/>
    <property type="gene ID" value="BAA30660"/>
</dbReference>
<dbReference type="GeneID" id="1443868"/>
<dbReference type="KEGG" id="pho:PH1548"/>
<dbReference type="eggNOG" id="arCOG01574">
    <property type="taxonomic scope" value="Archaea"/>
</dbReference>
<dbReference type="OrthoDB" id="30932at2157"/>
<dbReference type="Proteomes" id="UP000000752">
    <property type="component" value="Chromosome"/>
</dbReference>
<dbReference type="GO" id="GO:0000177">
    <property type="term" value="C:cytoplasmic exosome (RNase complex)"/>
    <property type="evidence" value="ECO:0007669"/>
    <property type="project" value="TreeGrafter"/>
</dbReference>
<dbReference type="GO" id="GO:0035925">
    <property type="term" value="F:mRNA 3'-UTR AU-rich region binding"/>
    <property type="evidence" value="ECO:0007669"/>
    <property type="project" value="TreeGrafter"/>
</dbReference>
<dbReference type="GO" id="GO:0016075">
    <property type="term" value="P:rRNA catabolic process"/>
    <property type="evidence" value="ECO:0007669"/>
    <property type="project" value="TreeGrafter"/>
</dbReference>
<dbReference type="CDD" id="cd11365">
    <property type="entry name" value="RNase_PH_archRRP42"/>
    <property type="match status" value="1"/>
</dbReference>
<dbReference type="FunFam" id="3.30.230.70:FF:000017">
    <property type="entry name" value="Exosome complex component Rrp42"/>
    <property type="match status" value="1"/>
</dbReference>
<dbReference type="Gene3D" id="3.30.230.70">
    <property type="entry name" value="GHMP Kinase, N-terminal domain"/>
    <property type="match status" value="1"/>
</dbReference>
<dbReference type="HAMAP" id="MF_00622">
    <property type="entry name" value="Exosome_Rrp42"/>
    <property type="match status" value="1"/>
</dbReference>
<dbReference type="InterPro" id="IPR001247">
    <property type="entry name" value="ExoRNase_PH_dom1"/>
</dbReference>
<dbReference type="InterPro" id="IPR015847">
    <property type="entry name" value="ExoRNase_PH_dom2"/>
</dbReference>
<dbReference type="InterPro" id="IPR036345">
    <property type="entry name" value="ExoRNase_PH_dom2_sf"/>
</dbReference>
<dbReference type="InterPro" id="IPR050590">
    <property type="entry name" value="Exosome_comp_Rrp42_subfam"/>
</dbReference>
<dbReference type="InterPro" id="IPR027408">
    <property type="entry name" value="PNPase/RNase_PH_dom_sf"/>
</dbReference>
<dbReference type="InterPro" id="IPR020568">
    <property type="entry name" value="Ribosomal_Su5_D2-typ_SF"/>
</dbReference>
<dbReference type="InterPro" id="IPR020869">
    <property type="entry name" value="Rrp42_archaea"/>
</dbReference>
<dbReference type="NCBIfam" id="NF003282">
    <property type="entry name" value="PRK04282.1-1"/>
    <property type="match status" value="1"/>
</dbReference>
<dbReference type="PANTHER" id="PTHR11097:SF8">
    <property type="entry name" value="EXOSOME COMPLEX COMPONENT RRP42"/>
    <property type="match status" value="1"/>
</dbReference>
<dbReference type="PANTHER" id="PTHR11097">
    <property type="entry name" value="EXOSOME COMPLEX EXONUCLEASE RIBOSOMAL RNA PROCESSING PROTEIN"/>
    <property type="match status" value="1"/>
</dbReference>
<dbReference type="Pfam" id="PF01138">
    <property type="entry name" value="RNase_PH"/>
    <property type="match status" value="1"/>
</dbReference>
<dbReference type="Pfam" id="PF03725">
    <property type="entry name" value="RNase_PH_C"/>
    <property type="match status" value="1"/>
</dbReference>
<dbReference type="SUPFAM" id="SSF55666">
    <property type="entry name" value="Ribonuclease PH domain 2-like"/>
    <property type="match status" value="1"/>
</dbReference>
<dbReference type="SUPFAM" id="SSF54211">
    <property type="entry name" value="Ribosomal protein S5 domain 2-like"/>
    <property type="match status" value="1"/>
</dbReference>
<evidence type="ECO:0000255" key="1">
    <source>
        <dbReference type="HAMAP-Rule" id="MF_00622"/>
    </source>
</evidence>
<comment type="function">
    <text evidence="1">Non-catalytic component of the exosome, which is a complex involved in RNA degradation. Contributes to the structuring of the Rrp41 active site.</text>
</comment>
<comment type="subunit">
    <text evidence="1">Component of the archaeal exosome complex. Forms a hexameric ring-like arrangement composed of 3 Rrp41-Rrp42 heterodimers. The hexameric ring associates with a trimer of Rrp4 and/or Csl4 subunits.</text>
</comment>
<comment type="subcellular location">
    <subcellularLocation>
        <location evidence="1">Cytoplasm</location>
    </subcellularLocation>
</comment>
<comment type="similarity">
    <text evidence="1">Belongs to the RNase PH family. Rrp42 subfamily.</text>
</comment>
<feature type="chain" id="PRO_0000140004" description="Exosome complex component Rrp42">
    <location>
        <begin position="1"/>
        <end position="274"/>
    </location>
</feature>
<reference key="1">
    <citation type="journal article" date="1998" name="DNA Res.">
        <title>Complete sequence and gene organization of the genome of a hyper-thermophilic archaebacterium, Pyrococcus horikoshii OT3.</title>
        <authorList>
            <person name="Kawarabayasi Y."/>
            <person name="Sawada M."/>
            <person name="Horikawa H."/>
            <person name="Haikawa Y."/>
            <person name="Hino Y."/>
            <person name="Yamamoto S."/>
            <person name="Sekine M."/>
            <person name="Baba S."/>
            <person name="Kosugi H."/>
            <person name="Hosoyama A."/>
            <person name="Nagai Y."/>
            <person name="Sakai M."/>
            <person name="Ogura K."/>
            <person name="Otsuka R."/>
            <person name="Nakazawa H."/>
            <person name="Takamiya M."/>
            <person name="Ohfuku Y."/>
            <person name="Funahashi T."/>
            <person name="Tanaka T."/>
            <person name="Kudoh Y."/>
            <person name="Yamazaki J."/>
            <person name="Kushida N."/>
            <person name="Oguchi A."/>
            <person name="Aoki K."/>
            <person name="Yoshizawa T."/>
            <person name="Nakamura Y."/>
            <person name="Robb F.T."/>
            <person name="Horikoshi K."/>
            <person name="Masuchi Y."/>
            <person name="Shizuya H."/>
            <person name="Kikuchi H."/>
        </authorList>
    </citation>
    <scope>NUCLEOTIDE SEQUENCE [LARGE SCALE GENOMIC DNA]</scope>
    <source>
        <strain>ATCC 700860 / DSM 12428 / JCM 9974 / NBRC 100139 / OT-3</strain>
    </source>
</reference>